<sequence>MDWLAKYWWILVIVFLVGVLLNVIKDLKRVDHKKFLANKPELPPHRDFNDKWDDDDDWPKKDQPKK</sequence>
<protein>
    <recommendedName>
        <fullName evidence="1">UPF0370 protein YpfN</fullName>
    </recommendedName>
</protein>
<gene>
    <name evidence="1" type="primary">ypfN</name>
    <name type="ordered locus">SbBS512_E2844</name>
</gene>
<reference key="1">
    <citation type="submission" date="2008-05" db="EMBL/GenBank/DDBJ databases">
        <title>Complete sequence of Shigella boydii serotype 18 strain BS512.</title>
        <authorList>
            <person name="Rasko D.A."/>
            <person name="Rosovitz M."/>
            <person name="Maurelli A.T."/>
            <person name="Myers G."/>
            <person name="Seshadri R."/>
            <person name="Cer R."/>
            <person name="Jiang L."/>
            <person name="Ravel J."/>
            <person name="Sebastian Y."/>
        </authorList>
    </citation>
    <scope>NUCLEOTIDE SEQUENCE [LARGE SCALE GENOMIC DNA]</scope>
    <source>
        <strain>CDC 3083-94 / BS512</strain>
    </source>
</reference>
<dbReference type="EMBL" id="CP001063">
    <property type="protein sequence ID" value="ACD09604.1"/>
    <property type="molecule type" value="Genomic_DNA"/>
</dbReference>
<dbReference type="RefSeq" id="WP_000383836.1">
    <property type="nucleotide sequence ID" value="NC_010658.1"/>
</dbReference>
<dbReference type="SMR" id="B2TXP8"/>
<dbReference type="STRING" id="344609.SbBS512_E2844"/>
<dbReference type="KEGG" id="sbc:SbBS512_E2844"/>
<dbReference type="HOGENOM" id="CLU_198936_0_0_6"/>
<dbReference type="Proteomes" id="UP000001030">
    <property type="component" value="Chromosome"/>
</dbReference>
<dbReference type="GO" id="GO:0005886">
    <property type="term" value="C:plasma membrane"/>
    <property type="evidence" value="ECO:0007669"/>
    <property type="project" value="UniProtKB-SubCell"/>
</dbReference>
<dbReference type="HAMAP" id="MF_01566">
    <property type="entry name" value="UPF0370"/>
    <property type="match status" value="1"/>
</dbReference>
<dbReference type="InterPro" id="IPR020910">
    <property type="entry name" value="UPF0370"/>
</dbReference>
<dbReference type="NCBIfam" id="NF010185">
    <property type="entry name" value="PRK13664.1"/>
    <property type="match status" value="1"/>
</dbReference>
<dbReference type="Pfam" id="PF13980">
    <property type="entry name" value="UPF0370"/>
    <property type="match status" value="1"/>
</dbReference>
<proteinExistence type="inferred from homology"/>
<name>YPFN_SHIB3</name>
<accession>B2TXP8</accession>
<keyword id="KW-1003">Cell membrane</keyword>
<keyword id="KW-0472">Membrane</keyword>
<keyword id="KW-1185">Reference proteome</keyword>
<keyword id="KW-0812">Transmembrane</keyword>
<keyword id="KW-1133">Transmembrane helix</keyword>
<organism>
    <name type="scientific">Shigella boydii serotype 18 (strain CDC 3083-94 / BS512)</name>
    <dbReference type="NCBI Taxonomy" id="344609"/>
    <lineage>
        <taxon>Bacteria</taxon>
        <taxon>Pseudomonadati</taxon>
        <taxon>Pseudomonadota</taxon>
        <taxon>Gammaproteobacteria</taxon>
        <taxon>Enterobacterales</taxon>
        <taxon>Enterobacteriaceae</taxon>
        <taxon>Shigella</taxon>
    </lineage>
</organism>
<evidence type="ECO:0000255" key="1">
    <source>
        <dbReference type="HAMAP-Rule" id="MF_01566"/>
    </source>
</evidence>
<evidence type="ECO:0000256" key="2">
    <source>
        <dbReference type="SAM" id="MobiDB-lite"/>
    </source>
</evidence>
<feature type="chain" id="PRO_1000199735" description="UPF0370 protein YpfN">
    <location>
        <begin position="1"/>
        <end position="66"/>
    </location>
</feature>
<feature type="transmembrane region" description="Helical" evidence="1">
    <location>
        <begin position="4"/>
        <end position="24"/>
    </location>
</feature>
<feature type="region of interest" description="Disordered" evidence="2">
    <location>
        <begin position="39"/>
        <end position="66"/>
    </location>
</feature>
<feature type="compositionally biased region" description="Basic and acidic residues" evidence="2">
    <location>
        <begin position="42"/>
        <end position="51"/>
    </location>
</feature>
<comment type="subcellular location">
    <subcellularLocation>
        <location evidence="1">Cell membrane</location>
        <topology evidence="1">Single-pass membrane protein</topology>
    </subcellularLocation>
</comment>
<comment type="similarity">
    <text evidence="1">Belongs to the UPF0370 family.</text>
</comment>